<gene>
    <name evidence="1" type="primary">nrdR</name>
    <name type="ordered locus">PsycPRwf_2386</name>
</gene>
<organism>
    <name type="scientific">Psychrobacter sp. (strain PRwf-1)</name>
    <dbReference type="NCBI Taxonomy" id="349106"/>
    <lineage>
        <taxon>Bacteria</taxon>
        <taxon>Pseudomonadati</taxon>
        <taxon>Pseudomonadota</taxon>
        <taxon>Gammaproteobacteria</taxon>
        <taxon>Moraxellales</taxon>
        <taxon>Moraxellaceae</taxon>
        <taxon>Psychrobacter</taxon>
    </lineage>
</organism>
<dbReference type="EMBL" id="CP000713">
    <property type="protein sequence ID" value="ABQ95326.1"/>
    <property type="molecule type" value="Genomic_DNA"/>
</dbReference>
<dbReference type="SMR" id="A5WI35"/>
<dbReference type="STRING" id="349106.PsycPRwf_2386"/>
<dbReference type="KEGG" id="prw:PsycPRwf_2386"/>
<dbReference type="eggNOG" id="COG1327">
    <property type="taxonomic scope" value="Bacteria"/>
</dbReference>
<dbReference type="HOGENOM" id="CLU_108412_0_0_6"/>
<dbReference type="GO" id="GO:0005524">
    <property type="term" value="F:ATP binding"/>
    <property type="evidence" value="ECO:0007669"/>
    <property type="project" value="UniProtKB-KW"/>
</dbReference>
<dbReference type="GO" id="GO:0003677">
    <property type="term" value="F:DNA binding"/>
    <property type="evidence" value="ECO:0007669"/>
    <property type="project" value="UniProtKB-KW"/>
</dbReference>
<dbReference type="GO" id="GO:0008270">
    <property type="term" value="F:zinc ion binding"/>
    <property type="evidence" value="ECO:0007669"/>
    <property type="project" value="UniProtKB-UniRule"/>
</dbReference>
<dbReference type="GO" id="GO:0045892">
    <property type="term" value="P:negative regulation of DNA-templated transcription"/>
    <property type="evidence" value="ECO:0007669"/>
    <property type="project" value="UniProtKB-UniRule"/>
</dbReference>
<dbReference type="HAMAP" id="MF_00440">
    <property type="entry name" value="NrdR"/>
    <property type="match status" value="1"/>
</dbReference>
<dbReference type="InterPro" id="IPR005144">
    <property type="entry name" value="ATP-cone_dom"/>
</dbReference>
<dbReference type="InterPro" id="IPR055173">
    <property type="entry name" value="NrdR-like_N"/>
</dbReference>
<dbReference type="InterPro" id="IPR003796">
    <property type="entry name" value="RNR_NrdR-like"/>
</dbReference>
<dbReference type="NCBIfam" id="TIGR00244">
    <property type="entry name" value="transcriptional regulator NrdR"/>
    <property type="match status" value="1"/>
</dbReference>
<dbReference type="PANTHER" id="PTHR30455">
    <property type="entry name" value="TRANSCRIPTIONAL REPRESSOR NRDR"/>
    <property type="match status" value="1"/>
</dbReference>
<dbReference type="PANTHER" id="PTHR30455:SF2">
    <property type="entry name" value="TRANSCRIPTIONAL REPRESSOR NRDR"/>
    <property type="match status" value="1"/>
</dbReference>
<dbReference type="Pfam" id="PF03477">
    <property type="entry name" value="ATP-cone"/>
    <property type="match status" value="1"/>
</dbReference>
<dbReference type="Pfam" id="PF22811">
    <property type="entry name" value="Zn_ribbon_NrdR"/>
    <property type="match status" value="1"/>
</dbReference>
<dbReference type="PROSITE" id="PS51161">
    <property type="entry name" value="ATP_CONE"/>
    <property type="match status" value="1"/>
</dbReference>
<reference key="1">
    <citation type="submission" date="2007-05" db="EMBL/GenBank/DDBJ databases">
        <title>Complete sequence of chromosome of Psychrobacter sp. PRwf-1.</title>
        <authorList>
            <consortium name="US DOE Joint Genome Institute"/>
            <person name="Copeland A."/>
            <person name="Lucas S."/>
            <person name="Lapidus A."/>
            <person name="Barry K."/>
            <person name="Detter J.C."/>
            <person name="Glavina del Rio T."/>
            <person name="Hammon N."/>
            <person name="Israni S."/>
            <person name="Dalin E."/>
            <person name="Tice H."/>
            <person name="Pitluck S."/>
            <person name="Chain P."/>
            <person name="Malfatti S."/>
            <person name="Shin M."/>
            <person name="Vergez L."/>
            <person name="Schmutz J."/>
            <person name="Larimer F."/>
            <person name="Land M."/>
            <person name="Hauser L."/>
            <person name="Kyrpides N."/>
            <person name="Kim E."/>
            <person name="Tiedje J."/>
            <person name="Richardson P."/>
        </authorList>
    </citation>
    <scope>NUCLEOTIDE SEQUENCE [LARGE SCALE GENOMIC DNA]</scope>
    <source>
        <strain>PRwf-1</strain>
    </source>
</reference>
<proteinExistence type="inferred from homology"/>
<evidence type="ECO:0000255" key="1">
    <source>
        <dbReference type="HAMAP-Rule" id="MF_00440"/>
    </source>
</evidence>
<protein>
    <recommendedName>
        <fullName evidence="1">Transcriptional repressor NrdR</fullName>
    </recommendedName>
</protein>
<comment type="function">
    <text evidence="1">Negatively regulates transcription of bacterial ribonucleotide reductase nrd genes and operons by binding to NrdR-boxes.</text>
</comment>
<comment type="cofactor">
    <cofactor evidence="1">
        <name>Zn(2+)</name>
        <dbReference type="ChEBI" id="CHEBI:29105"/>
    </cofactor>
    <text evidence="1">Binds 1 zinc ion.</text>
</comment>
<comment type="similarity">
    <text evidence="1">Belongs to the NrdR family.</text>
</comment>
<name>NRDR_PSYWF</name>
<sequence>MQCPYCNADDTKVIDSRLAAEGAQVRRRRQCNQCQERFTTFEVVEVVMPRIIKSNGRIEPYDSQKLKRSIQLPLQKRPVTLDEQEAMISRIEKRIRQLGEREISSKGLGEVVMSELKELDDVAYVRFASVYRDFQDIEAFRQELQNIRPVDEQ</sequence>
<keyword id="KW-0067">ATP-binding</keyword>
<keyword id="KW-0238">DNA-binding</keyword>
<keyword id="KW-0479">Metal-binding</keyword>
<keyword id="KW-0547">Nucleotide-binding</keyword>
<keyword id="KW-0678">Repressor</keyword>
<keyword id="KW-0804">Transcription</keyword>
<keyword id="KW-0805">Transcription regulation</keyword>
<keyword id="KW-0862">Zinc</keyword>
<keyword id="KW-0863">Zinc-finger</keyword>
<accession>A5WI35</accession>
<feature type="chain" id="PRO_1000080807" description="Transcriptional repressor NrdR">
    <location>
        <begin position="1"/>
        <end position="153"/>
    </location>
</feature>
<feature type="domain" description="ATP-cone" evidence="1">
    <location>
        <begin position="49"/>
        <end position="139"/>
    </location>
</feature>
<feature type="zinc finger region" evidence="1">
    <location>
        <begin position="3"/>
        <end position="34"/>
    </location>
</feature>